<evidence type="ECO:0000250" key="1"/>
<evidence type="ECO:0000255" key="2"/>
<evidence type="ECO:0000305" key="3"/>
<name>NORM_PHOLL</name>
<proteinExistence type="inferred from homology"/>
<gene>
    <name type="primary">norM</name>
    <name type="ordered locus">plu3516</name>
</gene>
<dbReference type="EMBL" id="BX571870">
    <property type="protein sequence ID" value="CAE15889.1"/>
    <property type="molecule type" value="Genomic_DNA"/>
</dbReference>
<dbReference type="RefSeq" id="WP_011147696.1">
    <property type="nucleotide sequence ID" value="NC_005126.1"/>
</dbReference>
<dbReference type="SMR" id="Q7N1G0"/>
<dbReference type="STRING" id="243265.plu3516"/>
<dbReference type="GeneID" id="48849759"/>
<dbReference type="KEGG" id="plu:plu3516"/>
<dbReference type="eggNOG" id="COG0534">
    <property type="taxonomic scope" value="Bacteria"/>
</dbReference>
<dbReference type="HOGENOM" id="CLU_012893_6_0_6"/>
<dbReference type="OrthoDB" id="9780160at2"/>
<dbReference type="Proteomes" id="UP000002514">
    <property type="component" value="Chromosome"/>
</dbReference>
<dbReference type="GO" id="GO:0005886">
    <property type="term" value="C:plasma membrane"/>
    <property type="evidence" value="ECO:0007669"/>
    <property type="project" value="UniProtKB-SubCell"/>
</dbReference>
<dbReference type="GO" id="GO:0015297">
    <property type="term" value="F:antiporter activity"/>
    <property type="evidence" value="ECO:0007669"/>
    <property type="project" value="UniProtKB-KW"/>
</dbReference>
<dbReference type="GO" id="GO:0042910">
    <property type="term" value="F:xenobiotic transmembrane transporter activity"/>
    <property type="evidence" value="ECO:0007669"/>
    <property type="project" value="InterPro"/>
</dbReference>
<dbReference type="GO" id="GO:0006811">
    <property type="term" value="P:monoatomic ion transport"/>
    <property type="evidence" value="ECO:0007669"/>
    <property type="project" value="UniProtKB-KW"/>
</dbReference>
<dbReference type="CDD" id="cd13131">
    <property type="entry name" value="MATE_NorM_like"/>
    <property type="match status" value="1"/>
</dbReference>
<dbReference type="InterPro" id="IPR002528">
    <property type="entry name" value="MATE_fam"/>
</dbReference>
<dbReference type="InterPro" id="IPR050222">
    <property type="entry name" value="MATE_MdtK"/>
</dbReference>
<dbReference type="InterPro" id="IPR048279">
    <property type="entry name" value="MdtK-like"/>
</dbReference>
<dbReference type="NCBIfam" id="TIGR00797">
    <property type="entry name" value="matE"/>
    <property type="match status" value="1"/>
</dbReference>
<dbReference type="PANTHER" id="PTHR43298:SF2">
    <property type="entry name" value="FMN_FAD EXPORTER YEEO-RELATED"/>
    <property type="match status" value="1"/>
</dbReference>
<dbReference type="PANTHER" id="PTHR43298">
    <property type="entry name" value="MULTIDRUG RESISTANCE PROTEIN NORM-RELATED"/>
    <property type="match status" value="1"/>
</dbReference>
<dbReference type="Pfam" id="PF01554">
    <property type="entry name" value="MatE"/>
    <property type="match status" value="2"/>
</dbReference>
<dbReference type="PIRSF" id="PIRSF006603">
    <property type="entry name" value="DinF"/>
    <property type="match status" value="1"/>
</dbReference>
<sequence>MAKFSNWRELKQLLFFSFPIIVSQIARTAMSFVDIVMSGHYATADLAAVTLGSSIWFPIFVLGYGTIIMLAADVAKQKAQHDDEGIKDSLKNYLFLAVILSIPIIILLMLVSWLLSFIGIDEHILEITQGYVIALACGVPSVMIFNVFRSFLQGLEDTKIAMYLSAGALLLNIPLNYILIYGKLGLPEMGGIGAGITTAIINNLIAVCLIIYFLLKKEYRRYRPDFSLPKYNSLIRTFYIGMPSGLALFVEMVFLDVIAITAAPLGAQVIAAHNIMLNITSIIYTITGGIAAAVTVRVGSYIGKRDKISLTGTIKISIALILSISAVIGVLIYYFAGSFISLYTNDNGVIIIALNIIFLLCLFQFFDSCQAALSGILRGFHDTRSVFYAPLFGYWLVGLPLGFILALTDWVTERMGIIGFWYGLVLGLFVNAILLFIILKVRQRGMISRLISY</sequence>
<protein>
    <recommendedName>
        <fullName>Probable multidrug resistance protein NorM</fullName>
    </recommendedName>
    <alternativeName>
        <fullName>Multidrug-efflux transporter</fullName>
    </alternativeName>
</protein>
<organism>
    <name type="scientific">Photorhabdus laumondii subsp. laumondii (strain DSM 15139 / CIP 105565 / TT01)</name>
    <name type="common">Photorhabdus luminescens subsp. laumondii</name>
    <dbReference type="NCBI Taxonomy" id="243265"/>
    <lineage>
        <taxon>Bacteria</taxon>
        <taxon>Pseudomonadati</taxon>
        <taxon>Pseudomonadota</taxon>
        <taxon>Gammaproteobacteria</taxon>
        <taxon>Enterobacterales</taxon>
        <taxon>Morganellaceae</taxon>
        <taxon>Photorhabdus</taxon>
    </lineage>
</organism>
<feature type="chain" id="PRO_0000164229" description="Probable multidrug resistance protein NorM">
    <location>
        <begin position="1"/>
        <end position="453"/>
    </location>
</feature>
<feature type="transmembrane region" description="Helical" evidence="2">
    <location>
        <begin position="13"/>
        <end position="35"/>
    </location>
</feature>
<feature type="transmembrane region" description="Helical" evidence="2">
    <location>
        <begin position="50"/>
        <end position="72"/>
    </location>
</feature>
<feature type="transmembrane region" description="Helical" evidence="2">
    <location>
        <begin position="93"/>
        <end position="115"/>
    </location>
</feature>
<feature type="transmembrane region" description="Helical" evidence="2">
    <location>
        <begin position="125"/>
        <end position="147"/>
    </location>
</feature>
<feature type="transmembrane region" description="Helical" evidence="2">
    <location>
        <begin position="160"/>
        <end position="182"/>
    </location>
</feature>
<feature type="transmembrane region" description="Helical" evidence="2">
    <location>
        <begin position="192"/>
        <end position="214"/>
    </location>
</feature>
<feature type="transmembrane region" description="Helical" evidence="2">
    <location>
        <begin position="238"/>
        <end position="260"/>
    </location>
</feature>
<feature type="transmembrane region" description="Helical" evidence="2">
    <location>
        <begin position="275"/>
        <end position="297"/>
    </location>
</feature>
<feature type="transmembrane region" description="Helical" evidence="2">
    <location>
        <begin position="318"/>
        <end position="340"/>
    </location>
</feature>
<feature type="transmembrane region" description="Helical" evidence="2">
    <location>
        <begin position="350"/>
        <end position="372"/>
    </location>
</feature>
<feature type="transmembrane region" description="Helical" evidence="2">
    <location>
        <begin position="385"/>
        <end position="407"/>
    </location>
</feature>
<feature type="transmembrane region" description="Helical" evidence="2">
    <location>
        <begin position="417"/>
        <end position="439"/>
    </location>
</feature>
<reference key="1">
    <citation type="journal article" date="2003" name="Nat. Biotechnol.">
        <title>The genome sequence of the entomopathogenic bacterium Photorhabdus luminescens.</title>
        <authorList>
            <person name="Duchaud E."/>
            <person name="Rusniok C."/>
            <person name="Frangeul L."/>
            <person name="Buchrieser C."/>
            <person name="Givaudan A."/>
            <person name="Taourit S."/>
            <person name="Bocs S."/>
            <person name="Boursaux-Eude C."/>
            <person name="Chandler M."/>
            <person name="Charles J.-F."/>
            <person name="Dassa E."/>
            <person name="Derose R."/>
            <person name="Derzelle S."/>
            <person name="Freyssinet G."/>
            <person name="Gaudriault S."/>
            <person name="Medigue C."/>
            <person name="Lanois A."/>
            <person name="Powell K."/>
            <person name="Siguier P."/>
            <person name="Vincent R."/>
            <person name="Wingate V."/>
            <person name="Zouine M."/>
            <person name="Glaser P."/>
            <person name="Boemare N."/>
            <person name="Danchin A."/>
            <person name="Kunst F."/>
        </authorList>
    </citation>
    <scope>NUCLEOTIDE SEQUENCE [LARGE SCALE GENOMIC DNA]</scope>
    <source>
        <strain>DSM 15139 / CIP 105565 / TT01</strain>
    </source>
</reference>
<accession>Q7N1G0</accession>
<keyword id="KW-0050">Antiport</keyword>
<keyword id="KW-0997">Cell inner membrane</keyword>
<keyword id="KW-1003">Cell membrane</keyword>
<keyword id="KW-0406">Ion transport</keyword>
<keyword id="KW-0472">Membrane</keyword>
<keyword id="KW-1185">Reference proteome</keyword>
<keyword id="KW-0812">Transmembrane</keyword>
<keyword id="KW-1133">Transmembrane helix</keyword>
<keyword id="KW-0813">Transport</keyword>
<comment type="function">
    <text evidence="1">Multidrug efflux pump.</text>
</comment>
<comment type="subcellular location">
    <subcellularLocation>
        <location evidence="1">Cell inner membrane</location>
        <topology evidence="1">Multi-pass membrane protein</topology>
    </subcellularLocation>
</comment>
<comment type="similarity">
    <text evidence="3">Belongs to the multi antimicrobial extrusion (MATE) (TC 2.A.66.1) family.</text>
</comment>